<proteinExistence type="inferred from homology"/>
<keyword id="KW-0963">Cytoplasm</keyword>
<keyword id="KW-0489">Methyltransferase</keyword>
<keyword id="KW-1185">Reference proteome</keyword>
<keyword id="KW-0949">S-adenosyl-L-methionine</keyword>
<keyword id="KW-0808">Transferase</keyword>
<evidence type="ECO:0000255" key="1">
    <source>
        <dbReference type="HAMAP-Rule" id="MF_00735"/>
    </source>
</evidence>
<sequence length="293" mass="32496">MPWIQLRIDTDGPNADAISDQLMEEGSLSITFEDGKDNPIYEPTLGETPLWSHTVIVALFEANFDLTPVVERLKLLPCLGDNFSHKVEQVEDKDWEREWMDNFHPIKFGDRLWICPSWREIPDPTAVNVILDPGLAFGTGTHPTTALCLEWLDGLDYSNKDVIDFGCGSGILAVAALKLGAERVTGIDIDYQAIEASKANAERNGVEDKLALYLPEDQPADLLADILVANILAGPLRELAPLIAEKVKPGGLLALSGLLQEQAEEISAFYSEWFNMDEPAHKDDWSRLTGIRK</sequence>
<reference key="1">
    <citation type="submission" date="2007-10" db="EMBL/GenBank/DDBJ databases">
        <title>Complete sequence of Shewanella pealeana ATCC 700345.</title>
        <authorList>
            <consortium name="US DOE Joint Genome Institute"/>
            <person name="Copeland A."/>
            <person name="Lucas S."/>
            <person name="Lapidus A."/>
            <person name="Barry K."/>
            <person name="Glavina del Rio T."/>
            <person name="Dalin E."/>
            <person name="Tice H."/>
            <person name="Pitluck S."/>
            <person name="Chertkov O."/>
            <person name="Brettin T."/>
            <person name="Bruce D."/>
            <person name="Detter J.C."/>
            <person name="Han C."/>
            <person name="Schmutz J."/>
            <person name="Larimer F."/>
            <person name="Land M."/>
            <person name="Hauser L."/>
            <person name="Kyrpides N."/>
            <person name="Kim E."/>
            <person name="Zhao J.-S.Z."/>
            <person name="Manno D."/>
            <person name="Hawari J."/>
            <person name="Richardson P."/>
        </authorList>
    </citation>
    <scope>NUCLEOTIDE SEQUENCE [LARGE SCALE GENOMIC DNA]</scope>
    <source>
        <strain>ATCC 700345 / ANG-SQ1</strain>
    </source>
</reference>
<organism>
    <name type="scientific">Shewanella pealeana (strain ATCC 700345 / ANG-SQ1)</name>
    <dbReference type="NCBI Taxonomy" id="398579"/>
    <lineage>
        <taxon>Bacteria</taxon>
        <taxon>Pseudomonadati</taxon>
        <taxon>Pseudomonadota</taxon>
        <taxon>Gammaproteobacteria</taxon>
        <taxon>Alteromonadales</taxon>
        <taxon>Shewanellaceae</taxon>
        <taxon>Shewanella</taxon>
    </lineage>
</organism>
<accession>A8GZI2</accession>
<comment type="function">
    <text evidence="1">Methylates ribosomal protein L11.</text>
</comment>
<comment type="catalytic activity">
    <reaction evidence="1">
        <text>L-lysyl-[protein] + 3 S-adenosyl-L-methionine = N(6),N(6),N(6)-trimethyl-L-lysyl-[protein] + 3 S-adenosyl-L-homocysteine + 3 H(+)</text>
        <dbReference type="Rhea" id="RHEA:54192"/>
        <dbReference type="Rhea" id="RHEA-COMP:9752"/>
        <dbReference type="Rhea" id="RHEA-COMP:13826"/>
        <dbReference type="ChEBI" id="CHEBI:15378"/>
        <dbReference type="ChEBI" id="CHEBI:29969"/>
        <dbReference type="ChEBI" id="CHEBI:57856"/>
        <dbReference type="ChEBI" id="CHEBI:59789"/>
        <dbReference type="ChEBI" id="CHEBI:61961"/>
    </reaction>
</comment>
<comment type="subcellular location">
    <subcellularLocation>
        <location evidence="1">Cytoplasm</location>
    </subcellularLocation>
</comment>
<comment type="similarity">
    <text evidence="1">Belongs to the methyltransferase superfamily. PrmA family.</text>
</comment>
<dbReference type="EC" id="2.1.1.-" evidence="1"/>
<dbReference type="EMBL" id="CP000851">
    <property type="protein sequence ID" value="ABV85719.1"/>
    <property type="molecule type" value="Genomic_DNA"/>
</dbReference>
<dbReference type="RefSeq" id="WP_012153660.1">
    <property type="nucleotide sequence ID" value="NC_009901.1"/>
</dbReference>
<dbReference type="SMR" id="A8GZI2"/>
<dbReference type="STRING" id="398579.Spea_0391"/>
<dbReference type="KEGG" id="spl:Spea_0391"/>
<dbReference type="eggNOG" id="COG2264">
    <property type="taxonomic scope" value="Bacteria"/>
</dbReference>
<dbReference type="HOGENOM" id="CLU_049382_4_1_6"/>
<dbReference type="OrthoDB" id="9785995at2"/>
<dbReference type="Proteomes" id="UP000002608">
    <property type="component" value="Chromosome"/>
</dbReference>
<dbReference type="GO" id="GO:0005829">
    <property type="term" value="C:cytosol"/>
    <property type="evidence" value="ECO:0007669"/>
    <property type="project" value="TreeGrafter"/>
</dbReference>
<dbReference type="GO" id="GO:0016279">
    <property type="term" value="F:protein-lysine N-methyltransferase activity"/>
    <property type="evidence" value="ECO:0007669"/>
    <property type="project" value="TreeGrafter"/>
</dbReference>
<dbReference type="GO" id="GO:0032259">
    <property type="term" value="P:methylation"/>
    <property type="evidence" value="ECO:0007669"/>
    <property type="project" value="UniProtKB-KW"/>
</dbReference>
<dbReference type="CDD" id="cd02440">
    <property type="entry name" value="AdoMet_MTases"/>
    <property type="match status" value="1"/>
</dbReference>
<dbReference type="Gene3D" id="3.40.50.150">
    <property type="entry name" value="Vaccinia Virus protein VP39"/>
    <property type="match status" value="1"/>
</dbReference>
<dbReference type="HAMAP" id="MF_00735">
    <property type="entry name" value="Methyltr_PrmA"/>
    <property type="match status" value="1"/>
</dbReference>
<dbReference type="InterPro" id="IPR050078">
    <property type="entry name" value="Ribosomal_L11_MeTrfase_PrmA"/>
</dbReference>
<dbReference type="InterPro" id="IPR004498">
    <property type="entry name" value="Ribosomal_PrmA_MeTrfase"/>
</dbReference>
<dbReference type="InterPro" id="IPR029063">
    <property type="entry name" value="SAM-dependent_MTases_sf"/>
</dbReference>
<dbReference type="NCBIfam" id="TIGR00406">
    <property type="entry name" value="prmA"/>
    <property type="match status" value="1"/>
</dbReference>
<dbReference type="PANTHER" id="PTHR43648">
    <property type="entry name" value="ELECTRON TRANSFER FLAVOPROTEIN BETA SUBUNIT LYSINE METHYLTRANSFERASE"/>
    <property type="match status" value="1"/>
</dbReference>
<dbReference type="PANTHER" id="PTHR43648:SF1">
    <property type="entry name" value="ELECTRON TRANSFER FLAVOPROTEIN BETA SUBUNIT LYSINE METHYLTRANSFERASE"/>
    <property type="match status" value="1"/>
</dbReference>
<dbReference type="Pfam" id="PF06325">
    <property type="entry name" value="PrmA"/>
    <property type="match status" value="1"/>
</dbReference>
<dbReference type="PIRSF" id="PIRSF000401">
    <property type="entry name" value="RPL11_MTase"/>
    <property type="match status" value="1"/>
</dbReference>
<dbReference type="SUPFAM" id="SSF53335">
    <property type="entry name" value="S-adenosyl-L-methionine-dependent methyltransferases"/>
    <property type="match status" value="1"/>
</dbReference>
<gene>
    <name evidence="1" type="primary">prmA</name>
    <name type="ordered locus">Spea_0391</name>
</gene>
<feature type="chain" id="PRO_1000083361" description="Ribosomal protein L11 methyltransferase">
    <location>
        <begin position="1"/>
        <end position="293"/>
    </location>
</feature>
<feature type="binding site" evidence="1">
    <location>
        <position position="145"/>
    </location>
    <ligand>
        <name>S-adenosyl-L-methionine</name>
        <dbReference type="ChEBI" id="CHEBI:59789"/>
    </ligand>
</feature>
<feature type="binding site" evidence="1">
    <location>
        <position position="166"/>
    </location>
    <ligand>
        <name>S-adenosyl-L-methionine</name>
        <dbReference type="ChEBI" id="CHEBI:59789"/>
    </ligand>
</feature>
<feature type="binding site" evidence="1">
    <location>
        <position position="188"/>
    </location>
    <ligand>
        <name>S-adenosyl-L-methionine</name>
        <dbReference type="ChEBI" id="CHEBI:59789"/>
    </ligand>
</feature>
<feature type="binding site" evidence="1">
    <location>
        <position position="230"/>
    </location>
    <ligand>
        <name>S-adenosyl-L-methionine</name>
        <dbReference type="ChEBI" id="CHEBI:59789"/>
    </ligand>
</feature>
<protein>
    <recommendedName>
        <fullName evidence="1">Ribosomal protein L11 methyltransferase</fullName>
        <shortName evidence="1">L11 Mtase</shortName>
        <ecNumber evidence="1">2.1.1.-</ecNumber>
    </recommendedName>
</protein>
<name>PRMA_SHEPA</name>